<proteinExistence type="inferred from homology"/>
<accession>B6I3I4</accession>
<organism>
    <name type="scientific">Escherichia coli (strain SE11)</name>
    <dbReference type="NCBI Taxonomy" id="409438"/>
    <lineage>
        <taxon>Bacteria</taxon>
        <taxon>Pseudomonadati</taxon>
        <taxon>Pseudomonadota</taxon>
        <taxon>Gammaproteobacteria</taxon>
        <taxon>Enterobacterales</taxon>
        <taxon>Enterobacteriaceae</taxon>
        <taxon>Escherichia</taxon>
    </lineage>
</organism>
<sequence length="396" mass="42758">MIISAASDYRAAAQRILPPFLFHYMDGGAYSEYTLRRNVEDLSEVALRQRILKNMSDLSLETTLFNEKLSMPVALAPVGLCGMYARRGEVQAAKAADAHGIPFTLSTVSVCPIEEVAPAIKRPMWFQLYVLRDRGFMRNALERAKAAGCSTLVFTVDMPTPGARYRDAHSGMSGPNAAMRRYLQAVTHPQWAWDVGLNGRPHDLGNISAYLGKPTGLEDYIGWLGNNFDPSISWKDLEWIRDFWDGPMVIKGILDPEDARDAVRFGADGIVVSNHGGRQLDGVLSSARALPAIADAVKGDIAILADSGIRNGLDVVRMIALGADTVLLGRAFLYALATAGQAGVANLLNLIEKEMKVAMTLTGAKSISEITQDSLVQGLGKELPTALAPMAKGNAA</sequence>
<dbReference type="EC" id="1.1.-.-" evidence="1"/>
<dbReference type="EMBL" id="AP009240">
    <property type="protein sequence ID" value="BAG79411.1"/>
    <property type="molecule type" value="Genomic_DNA"/>
</dbReference>
<dbReference type="RefSeq" id="WP_000586964.1">
    <property type="nucleotide sequence ID" value="NC_011415.1"/>
</dbReference>
<dbReference type="SMR" id="B6I3I4"/>
<dbReference type="GeneID" id="93778319"/>
<dbReference type="KEGG" id="ecy:ECSE_3887"/>
<dbReference type="HOGENOM" id="CLU_020639_0_0_6"/>
<dbReference type="Proteomes" id="UP000008199">
    <property type="component" value="Chromosome"/>
</dbReference>
<dbReference type="GO" id="GO:0005886">
    <property type="term" value="C:plasma membrane"/>
    <property type="evidence" value="ECO:0007669"/>
    <property type="project" value="UniProtKB-SubCell"/>
</dbReference>
<dbReference type="GO" id="GO:0010181">
    <property type="term" value="F:FMN binding"/>
    <property type="evidence" value="ECO:0007669"/>
    <property type="project" value="InterPro"/>
</dbReference>
<dbReference type="GO" id="GO:0004459">
    <property type="term" value="F:L-lactate dehydrogenase activity"/>
    <property type="evidence" value="ECO:0007669"/>
    <property type="project" value="UniProtKB-UniRule"/>
</dbReference>
<dbReference type="GO" id="GO:0009060">
    <property type="term" value="P:aerobic respiration"/>
    <property type="evidence" value="ECO:0007669"/>
    <property type="project" value="TreeGrafter"/>
</dbReference>
<dbReference type="GO" id="GO:0006089">
    <property type="term" value="P:lactate metabolic process"/>
    <property type="evidence" value="ECO:0007669"/>
    <property type="project" value="UniProtKB-UniRule"/>
</dbReference>
<dbReference type="CDD" id="cd02809">
    <property type="entry name" value="alpha_hydroxyacid_oxid_FMN"/>
    <property type="match status" value="1"/>
</dbReference>
<dbReference type="FunFam" id="3.20.20.70:FF:000029">
    <property type="entry name" value="L-lactate dehydrogenase"/>
    <property type="match status" value="1"/>
</dbReference>
<dbReference type="Gene3D" id="3.20.20.70">
    <property type="entry name" value="Aldolase class I"/>
    <property type="match status" value="1"/>
</dbReference>
<dbReference type="HAMAP" id="MF_01559">
    <property type="entry name" value="L_lact_dehydr"/>
    <property type="match status" value="1"/>
</dbReference>
<dbReference type="InterPro" id="IPR013785">
    <property type="entry name" value="Aldolase_TIM"/>
</dbReference>
<dbReference type="InterPro" id="IPR012133">
    <property type="entry name" value="Alpha-hydoxy_acid_DH_FMN"/>
</dbReference>
<dbReference type="InterPro" id="IPR000262">
    <property type="entry name" value="FMN-dep_DH"/>
</dbReference>
<dbReference type="InterPro" id="IPR037396">
    <property type="entry name" value="FMN_HAD"/>
</dbReference>
<dbReference type="InterPro" id="IPR008259">
    <property type="entry name" value="FMN_hydac_DH_AS"/>
</dbReference>
<dbReference type="InterPro" id="IPR020920">
    <property type="entry name" value="LldD"/>
</dbReference>
<dbReference type="NCBIfam" id="NF033901">
    <property type="entry name" value="L_lactate_LldD"/>
    <property type="match status" value="1"/>
</dbReference>
<dbReference type="NCBIfam" id="NF008398">
    <property type="entry name" value="PRK11197.1"/>
    <property type="match status" value="1"/>
</dbReference>
<dbReference type="PANTHER" id="PTHR10578:SF85">
    <property type="entry name" value="L-LACTATE DEHYDROGENASE"/>
    <property type="match status" value="1"/>
</dbReference>
<dbReference type="PANTHER" id="PTHR10578">
    <property type="entry name" value="S -2-HYDROXY-ACID OXIDASE-RELATED"/>
    <property type="match status" value="1"/>
</dbReference>
<dbReference type="Pfam" id="PF01070">
    <property type="entry name" value="FMN_dh"/>
    <property type="match status" value="1"/>
</dbReference>
<dbReference type="PIRSF" id="PIRSF000138">
    <property type="entry name" value="Al-hdrx_acd_dh"/>
    <property type="match status" value="1"/>
</dbReference>
<dbReference type="SUPFAM" id="SSF51395">
    <property type="entry name" value="FMN-linked oxidoreductases"/>
    <property type="match status" value="1"/>
</dbReference>
<dbReference type="PROSITE" id="PS00557">
    <property type="entry name" value="FMN_HYDROXY_ACID_DH_1"/>
    <property type="match status" value="1"/>
</dbReference>
<dbReference type="PROSITE" id="PS51349">
    <property type="entry name" value="FMN_HYDROXY_ACID_DH_2"/>
    <property type="match status" value="1"/>
</dbReference>
<keyword id="KW-0997">Cell inner membrane</keyword>
<keyword id="KW-1003">Cell membrane</keyword>
<keyword id="KW-0285">Flavoprotein</keyword>
<keyword id="KW-0288">FMN</keyword>
<keyword id="KW-0472">Membrane</keyword>
<keyword id="KW-0560">Oxidoreductase</keyword>
<evidence type="ECO:0000255" key="1">
    <source>
        <dbReference type="HAMAP-Rule" id="MF_01559"/>
    </source>
</evidence>
<gene>
    <name evidence="1" type="primary">lldD</name>
    <name type="ordered locus">ECSE_3887</name>
</gene>
<feature type="chain" id="PRO_0000383422" description="L-lactate dehydrogenase">
    <location>
        <begin position="1"/>
        <end position="396"/>
    </location>
</feature>
<feature type="domain" description="FMN hydroxy acid dehydrogenase" evidence="1">
    <location>
        <begin position="1"/>
        <end position="380"/>
    </location>
</feature>
<feature type="active site" description="Proton acceptor" evidence="1">
    <location>
        <position position="275"/>
    </location>
</feature>
<feature type="binding site" evidence="1">
    <location>
        <position position="24"/>
    </location>
    <ligand>
        <name>substrate</name>
    </ligand>
</feature>
<feature type="binding site" evidence="1">
    <location>
        <position position="106"/>
    </location>
    <ligand>
        <name>FMN</name>
        <dbReference type="ChEBI" id="CHEBI:58210"/>
    </ligand>
</feature>
<feature type="binding site" evidence="1">
    <location>
        <position position="127"/>
    </location>
    <ligand>
        <name>FMN</name>
        <dbReference type="ChEBI" id="CHEBI:58210"/>
    </ligand>
</feature>
<feature type="binding site" evidence="1">
    <location>
        <position position="129"/>
    </location>
    <ligand>
        <name>substrate</name>
    </ligand>
</feature>
<feature type="binding site" evidence="1">
    <location>
        <position position="155"/>
    </location>
    <ligand>
        <name>FMN</name>
        <dbReference type="ChEBI" id="CHEBI:58210"/>
    </ligand>
</feature>
<feature type="binding site" evidence="1">
    <location>
        <position position="164"/>
    </location>
    <ligand>
        <name>substrate</name>
    </ligand>
</feature>
<feature type="binding site" evidence="1">
    <location>
        <position position="251"/>
    </location>
    <ligand>
        <name>FMN</name>
        <dbReference type="ChEBI" id="CHEBI:58210"/>
    </ligand>
</feature>
<feature type="binding site" evidence="1">
    <location>
        <position position="278"/>
    </location>
    <ligand>
        <name>substrate</name>
    </ligand>
</feature>
<feature type="binding site" evidence="1">
    <location>
        <begin position="306"/>
        <end position="330"/>
    </location>
    <ligand>
        <name>FMN</name>
        <dbReference type="ChEBI" id="CHEBI:58210"/>
    </ligand>
</feature>
<protein>
    <recommendedName>
        <fullName evidence="1">L-lactate dehydrogenase</fullName>
        <ecNumber evidence="1">1.1.-.-</ecNumber>
    </recommendedName>
</protein>
<reference key="1">
    <citation type="journal article" date="2008" name="DNA Res.">
        <title>Complete genome sequence and comparative analysis of the wild-type commensal Escherichia coli strain SE11 isolated from a healthy adult.</title>
        <authorList>
            <person name="Oshima K."/>
            <person name="Toh H."/>
            <person name="Ogura Y."/>
            <person name="Sasamoto H."/>
            <person name="Morita H."/>
            <person name="Park S.-H."/>
            <person name="Ooka T."/>
            <person name="Iyoda S."/>
            <person name="Taylor T.D."/>
            <person name="Hayashi T."/>
            <person name="Itoh K."/>
            <person name="Hattori M."/>
        </authorList>
    </citation>
    <scope>NUCLEOTIDE SEQUENCE [LARGE SCALE GENOMIC DNA]</scope>
    <source>
        <strain>SE11</strain>
    </source>
</reference>
<name>LLDD_ECOSE</name>
<comment type="function">
    <text evidence="1">Catalyzes the conversion of L-lactate to pyruvate. Is coupled to the respiratory chain.</text>
</comment>
<comment type="catalytic activity">
    <reaction evidence="1">
        <text>(S)-lactate + A = pyruvate + AH2</text>
        <dbReference type="Rhea" id="RHEA:45816"/>
        <dbReference type="ChEBI" id="CHEBI:13193"/>
        <dbReference type="ChEBI" id="CHEBI:15361"/>
        <dbReference type="ChEBI" id="CHEBI:16651"/>
        <dbReference type="ChEBI" id="CHEBI:17499"/>
    </reaction>
</comment>
<comment type="cofactor">
    <cofactor evidence="1">
        <name>FMN</name>
        <dbReference type="ChEBI" id="CHEBI:58210"/>
    </cofactor>
</comment>
<comment type="subcellular location">
    <subcellularLocation>
        <location evidence="1">Cell inner membrane</location>
        <topology evidence="1">Peripheral membrane protein</topology>
    </subcellularLocation>
</comment>
<comment type="similarity">
    <text evidence="1">Belongs to the FMN-dependent alpha-hydroxy acid dehydrogenase family.</text>
</comment>